<comment type="function">
    <text evidence="1">Catalyzes the condensation of carbamoyl phosphate and aspartate to form carbamoyl aspartate and inorganic phosphate, the committed step in the de novo pyrimidine nucleotide biosynthesis pathway.</text>
</comment>
<comment type="catalytic activity">
    <reaction evidence="1">
        <text>carbamoyl phosphate + L-aspartate = N-carbamoyl-L-aspartate + phosphate + H(+)</text>
        <dbReference type="Rhea" id="RHEA:20013"/>
        <dbReference type="ChEBI" id="CHEBI:15378"/>
        <dbReference type="ChEBI" id="CHEBI:29991"/>
        <dbReference type="ChEBI" id="CHEBI:32814"/>
        <dbReference type="ChEBI" id="CHEBI:43474"/>
        <dbReference type="ChEBI" id="CHEBI:58228"/>
        <dbReference type="EC" id="2.1.3.2"/>
    </reaction>
</comment>
<comment type="pathway">
    <text evidence="1">Pyrimidine metabolism; UMP biosynthesis via de novo pathway; (S)-dihydroorotate from bicarbonate: step 2/3.</text>
</comment>
<comment type="subunit">
    <text evidence="1">Heterododecamer (2C3:3R2) of six catalytic PyrB chains organized as two trimers (C3), and six regulatory PyrI chains organized as three dimers (R2).</text>
</comment>
<comment type="similarity">
    <text evidence="1">Belongs to the aspartate/ornithine carbamoyltransferase superfamily. ATCase family.</text>
</comment>
<proteinExistence type="inferred from homology"/>
<evidence type="ECO:0000255" key="1">
    <source>
        <dbReference type="HAMAP-Rule" id="MF_00001"/>
    </source>
</evidence>
<dbReference type="EC" id="2.1.3.2" evidence="1"/>
<dbReference type="EMBL" id="CP001337">
    <property type="protein sequence ID" value="ACL26205.1"/>
    <property type="molecule type" value="Genomic_DNA"/>
</dbReference>
<dbReference type="RefSeq" id="WP_015942052.1">
    <property type="nucleotide sequence ID" value="NC_011831.1"/>
</dbReference>
<dbReference type="SMR" id="B8G8T0"/>
<dbReference type="STRING" id="326427.Cagg_3361"/>
<dbReference type="KEGG" id="cag:Cagg_3361"/>
<dbReference type="eggNOG" id="COG0540">
    <property type="taxonomic scope" value="Bacteria"/>
</dbReference>
<dbReference type="HOGENOM" id="CLU_043846_2_0_0"/>
<dbReference type="OrthoDB" id="9774690at2"/>
<dbReference type="UniPathway" id="UPA00070">
    <property type="reaction ID" value="UER00116"/>
</dbReference>
<dbReference type="Proteomes" id="UP000002508">
    <property type="component" value="Chromosome"/>
</dbReference>
<dbReference type="GO" id="GO:0005829">
    <property type="term" value="C:cytosol"/>
    <property type="evidence" value="ECO:0007669"/>
    <property type="project" value="TreeGrafter"/>
</dbReference>
<dbReference type="GO" id="GO:0016597">
    <property type="term" value="F:amino acid binding"/>
    <property type="evidence" value="ECO:0007669"/>
    <property type="project" value="InterPro"/>
</dbReference>
<dbReference type="GO" id="GO:0004070">
    <property type="term" value="F:aspartate carbamoyltransferase activity"/>
    <property type="evidence" value="ECO:0007669"/>
    <property type="project" value="UniProtKB-UniRule"/>
</dbReference>
<dbReference type="GO" id="GO:0006207">
    <property type="term" value="P:'de novo' pyrimidine nucleobase biosynthetic process"/>
    <property type="evidence" value="ECO:0007669"/>
    <property type="project" value="InterPro"/>
</dbReference>
<dbReference type="GO" id="GO:0044205">
    <property type="term" value="P:'de novo' UMP biosynthetic process"/>
    <property type="evidence" value="ECO:0007669"/>
    <property type="project" value="UniProtKB-UniRule"/>
</dbReference>
<dbReference type="GO" id="GO:0006520">
    <property type="term" value="P:amino acid metabolic process"/>
    <property type="evidence" value="ECO:0007669"/>
    <property type="project" value="InterPro"/>
</dbReference>
<dbReference type="FunFam" id="3.40.50.1370:FF:000007">
    <property type="entry name" value="Aspartate carbamoyltransferase"/>
    <property type="match status" value="1"/>
</dbReference>
<dbReference type="Gene3D" id="3.40.50.1370">
    <property type="entry name" value="Aspartate/ornithine carbamoyltransferase"/>
    <property type="match status" value="2"/>
</dbReference>
<dbReference type="HAMAP" id="MF_00001">
    <property type="entry name" value="Asp_carb_tr"/>
    <property type="match status" value="1"/>
</dbReference>
<dbReference type="InterPro" id="IPR006132">
    <property type="entry name" value="Asp/Orn_carbamoyltranf_P-bd"/>
</dbReference>
<dbReference type="InterPro" id="IPR006130">
    <property type="entry name" value="Asp/Orn_carbamoylTrfase"/>
</dbReference>
<dbReference type="InterPro" id="IPR036901">
    <property type="entry name" value="Asp/Orn_carbamoylTrfase_sf"/>
</dbReference>
<dbReference type="InterPro" id="IPR002082">
    <property type="entry name" value="Asp_carbamoyltransf"/>
</dbReference>
<dbReference type="InterPro" id="IPR006131">
    <property type="entry name" value="Asp_carbamoyltransf_Asp/Orn-bd"/>
</dbReference>
<dbReference type="NCBIfam" id="TIGR00670">
    <property type="entry name" value="asp_carb_tr"/>
    <property type="match status" value="1"/>
</dbReference>
<dbReference type="NCBIfam" id="NF002032">
    <property type="entry name" value="PRK00856.1"/>
    <property type="match status" value="1"/>
</dbReference>
<dbReference type="PANTHER" id="PTHR45753:SF6">
    <property type="entry name" value="ASPARTATE CARBAMOYLTRANSFERASE"/>
    <property type="match status" value="1"/>
</dbReference>
<dbReference type="PANTHER" id="PTHR45753">
    <property type="entry name" value="ORNITHINE CARBAMOYLTRANSFERASE, MITOCHONDRIAL"/>
    <property type="match status" value="1"/>
</dbReference>
<dbReference type="Pfam" id="PF00185">
    <property type="entry name" value="OTCace"/>
    <property type="match status" value="1"/>
</dbReference>
<dbReference type="Pfam" id="PF02729">
    <property type="entry name" value="OTCace_N"/>
    <property type="match status" value="1"/>
</dbReference>
<dbReference type="PRINTS" id="PR00100">
    <property type="entry name" value="AOTCASE"/>
</dbReference>
<dbReference type="PRINTS" id="PR00101">
    <property type="entry name" value="ATCASE"/>
</dbReference>
<dbReference type="SUPFAM" id="SSF53671">
    <property type="entry name" value="Aspartate/ornithine carbamoyltransferase"/>
    <property type="match status" value="1"/>
</dbReference>
<dbReference type="PROSITE" id="PS00097">
    <property type="entry name" value="CARBAMOYLTRANSFERASE"/>
    <property type="match status" value="1"/>
</dbReference>
<keyword id="KW-0665">Pyrimidine biosynthesis</keyword>
<keyword id="KW-0808">Transferase</keyword>
<organism>
    <name type="scientific">Chloroflexus aggregans (strain MD-66 / DSM 9485)</name>
    <dbReference type="NCBI Taxonomy" id="326427"/>
    <lineage>
        <taxon>Bacteria</taxon>
        <taxon>Bacillati</taxon>
        <taxon>Chloroflexota</taxon>
        <taxon>Chloroflexia</taxon>
        <taxon>Chloroflexales</taxon>
        <taxon>Chloroflexineae</taxon>
        <taxon>Chloroflexaceae</taxon>
        <taxon>Chloroflexus</taxon>
    </lineage>
</organism>
<feature type="chain" id="PRO_1000116131" description="Aspartate carbamoyltransferase catalytic subunit">
    <location>
        <begin position="1"/>
        <end position="308"/>
    </location>
</feature>
<feature type="binding site" evidence="1">
    <location>
        <position position="58"/>
    </location>
    <ligand>
        <name>carbamoyl phosphate</name>
        <dbReference type="ChEBI" id="CHEBI:58228"/>
    </ligand>
</feature>
<feature type="binding site" evidence="1">
    <location>
        <position position="59"/>
    </location>
    <ligand>
        <name>carbamoyl phosphate</name>
        <dbReference type="ChEBI" id="CHEBI:58228"/>
    </ligand>
</feature>
<feature type="binding site" evidence="1">
    <location>
        <position position="86"/>
    </location>
    <ligand>
        <name>L-aspartate</name>
        <dbReference type="ChEBI" id="CHEBI:29991"/>
    </ligand>
</feature>
<feature type="binding site" evidence="1">
    <location>
        <position position="108"/>
    </location>
    <ligand>
        <name>carbamoyl phosphate</name>
        <dbReference type="ChEBI" id="CHEBI:58228"/>
    </ligand>
</feature>
<feature type="binding site" evidence="1">
    <location>
        <position position="136"/>
    </location>
    <ligand>
        <name>carbamoyl phosphate</name>
        <dbReference type="ChEBI" id="CHEBI:58228"/>
    </ligand>
</feature>
<feature type="binding site" evidence="1">
    <location>
        <position position="139"/>
    </location>
    <ligand>
        <name>carbamoyl phosphate</name>
        <dbReference type="ChEBI" id="CHEBI:58228"/>
    </ligand>
</feature>
<feature type="binding site" evidence="1">
    <location>
        <position position="169"/>
    </location>
    <ligand>
        <name>L-aspartate</name>
        <dbReference type="ChEBI" id="CHEBI:29991"/>
    </ligand>
</feature>
<feature type="binding site" evidence="1">
    <location>
        <position position="227"/>
    </location>
    <ligand>
        <name>L-aspartate</name>
        <dbReference type="ChEBI" id="CHEBI:29991"/>
    </ligand>
</feature>
<feature type="binding site" evidence="1">
    <location>
        <position position="268"/>
    </location>
    <ligand>
        <name>carbamoyl phosphate</name>
        <dbReference type="ChEBI" id="CHEBI:58228"/>
    </ligand>
</feature>
<feature type="binding site" evidence="1">
    <location>
        <position position="269"/>
    </location>
    <ligand>
        <name>carbamoyl phosphate</name>
        <dbReference type="ChEBI" id="CHEBI:58228"/>
    </ligand>
</feature>
<name>PYRB_CHLAD</name>
<protein>
    <recommendedName>
        <fullName evidence="1">Aspartate carbamoyltransferase catalytic subunit</fullName>
        <ecNumber evidence="1">2.1.3.2</ecNumber>
    </recommendedName>
    <alternativeName>
        <fullName evidence="1">Aspartate transcarbamylase</fullName>
        <shortName evidence="1">ATCase</shortName>
    </alternativeName>
</protein>
<accession>B8G8T0</accession>
<gene>
    <name evidence="1" type="primary">pyrB</name>
    <name type="ordered locus">Cagg_3361</name>
</gene>
<sequence length="308" mass="34141">MTERRRHAIDLDDFTATEIEEILETAESMREVLSREIKQVPALRGKTVVNMFFEESTRTRISFELAARALSANVVAFTARGSSVEKGESLVDTVRTLQALGADIIVMRHSRSGAPYLVARHFRGALINAGDGRHAHPTQALLDLYTMRSHHGQIRDLNVVIVGDILHSRVVRSNLWGLTRLGARVTLCGPPTLIGPSAFWTATWPTVRIAYDLDPLLAEADVVMALRLQKERMQHGLLPALREYTRIYGLTPERLARLPAHAIVMHPGPMNEGIEIFPEVATSATAVIEEQVTNGVAVRMALLYRMAG</sequence>
<reference key="1">
    <citation type="submission" date="2008-12" db="EMBL/GenBank/DDBJ databases">
        <title>Complete sequence of Chloroflexus aggregans DSM 9485.</title>
        <authorList>
            <consortium name="US DOE Joint Genome Institute"/>
            <person name="Lucas S."/>
            <person name="Copeland A."/>
            <person name="Lapidus A."/>
            <person name="Glavina del Rio T."/>
            <person name="Dalin E."/>
            <person name="Tice H."/>
            <person name="Pitluck S."/>
            <person name="Foster B."/>
            <person name="Larimer F."/>
            <person name="Land M."/>
            <person name="Hauser L."/>
            <person name="Kyrpides N."/>
            <person name="Mikhailova N."/>
            <person name="Bryant D.A."/>
            <person name="Richardson P."/>
        </authorList>
    </citation>
    <scope>NUCLEOTIDE SEQUENCE [LARGE SCALE GENOMIC DNA]</scope>
    <source>
        <strain>MD-66 / DSM 9485</strain>
    </source>
</reference>